<keyword id="KW-0067">ATP-binding</keyword>
<keyword id="KW-0133">Cell shape</keyword>
<keyword id="KW-0961">Cell wall biogenesis/degradation</keyword>
<keyword id="KW-0963">Cytoplasm</keyword>
<keyword id="KW-0436">Ligase</keyword>
<keyword id="KW-0460">Magnesium</keyword>
<keyword id="KW-0464">Manganese</keyword>
<keyword id="KW-0479">Metal-binding</keyword>
<keyword id="KW-0547">Nucleotide-binding</keyword>
<keyword id="KW-0573">Peptidoglycan synthesis</keyword>
<feature type="chain" id="PRO_1000091211" description="D-alanine--D-alanine ligase">
    <location>
        <begin position="1"/>
        <end position="347"/>
    </location>
</feature>
<feature type="domain" description="ATP-grasp" evidence="2">
    <location>
        <begin position="131"/>
        <end position="333"/>
    </location>
</feature>
<feature type="binding site" evidence="2">
    <location>
        <begin position="161"/>
        <end position="216"/>
    </location>
    <ligand>
        <name>ATP</name>
        <dbReference type="ChEBI" id="CHEBI:30616"/>
    </ligand>
</feature>
<feature type="binding site" evidence="2">
    <location>
        <position position="287"/>
    </location>
    <ligand>
        <name>Mg(2+)</name>
        <dbReference type="ChEBI" id="CHEBI:18420"/>
        <label>1</label>
    </ligand>
</feature>
<feature type="binding site" evidence="2">
    <location>
        <position position="300"/>
    </location>
    <ligand>
        <name>Mg(2+)</name>
        <dbReference type="ChEBI" id="CHEBI:18420"/>
        <label>1</label>
    </ligand>
</feature>
<feature type="binding site" evidence="2">
    <location>
        <position position="300"/>
    </location>
    <ligand>
        <name>Mg(2+)</name>
        <dbReference type="ChEBI" id="CHEBI:18420"/>
        <label>2</label>
    </ligand>
</feature>
<feature type="binding site" evidence="2">
    <location>
        <position position="302"/>
    </location>
    <ligand>
        <name>Mg(2+)</name>
        <dbReference type="ChEBI" id="CHEBI:18420"/>
        <label>2</label>
    </ligand>
</feature>
<sequence>MKQTIILLYGGRSAEREVSVLSAESVMRAVDYDRFTVKTFFISQSGDFIKTQEFSHDPGQEDRLMTNETIDWDKKVAPSAIYEEGAVVFPVLHGPMGEDGSVQGFLEVLKMPYVGCNILSSSLAMDKITTKRVLESAGIAQVPYVAIVEGDDVTAKIAEVEEKLAYPVFTKPSNMGSSVGISKSENQEELRQALELAFRYDSRVLVEQGVNAREIEVGLLGNYDVKSTLPGEVVKDVAFYDYDAKYIDNKITMDIPAKISDDVVAVMRQNAETAFRAIGGLGLSRCDFFYTDKGEIFLNELNTMPGFTQWSMYPLLWDNMGISYPELIERLVDLAKESFDKREAHLI</sequence>
<evidence type="ECO:0000250" key="1"/>
<evidence type="ECO:0000255" key="2">
    <source>
        <dbReference type="HAMAP-Rule" id="MF_00047"/>
    </source>
</evidence>
<gene>
    <name evidence="2" type="primary">ddl</name>
    <name type="ordered locus">SPCG_1643</name>
</gene>
<comment type="function">
    <text evidence="2">Cell wall formation.</text>
</comment>
<comment type="catalytic activity">
    <reaction evidence="2">
        <text>2 D-alanine + ATP = D-alanyl-D-alanine + ADP + phosphate + H(+)</text>
        <dbReference type="Rhea" id="RHEA:11224"/>
        <dbReference type="ChEBI" id="CHEBI:15378"/>
        <dbReference type="ChEBI" id="CHEBI:30616"/>
        <dbReference type="ChEBI" id="CHEBI:43474"/>
        <dbReference type="ChEBI" id="CHEBI:57416"/>
        <dbReference type="ChEBI" id="CHEBI:57822"/>
        <dbReference type="ChEBI" id="CHEBI:456216"/>
        <dbReference type="EC" id="6.3.2.4"/>
    </reaction>
</comment>
<comment type="cofactor">
    <cofactor evidence="1">
        <name>Mg(2+)</name>
        <dbReference type="ChEBI" id="CHEBI:18420"/>
    </cofactor>
    <cofactor evidence="1">
        <name>Mn(2+)</name>
        <dbReference type="ChEBI" id="CHEBI:29035"/>
    </cofactor>
    <text evidence="1">Binds 2 magnesium or manganese ions per subunit.</text>
</comment>
<comment type="pathway">
    <text evidence="2">Cell wall biogenesis; peptidoglycan biosynthesis.</text>
</comment>
<comment type="subcellular location">
    <subcellularLocation>
        <location evidence="2">Cytoplasm</location>
    </subcellularLocation>
</comment>
<comment type="similarity">
    <text evidence="2">Belongs to the D-alanine--D-alanine ligase family.</text>
</comment>
<protein>
    <recommendedName>
        <fullName evidence="2">D-alanine--D-alanine ligase</fullName>
        <ecNumber evidence="2">6.3.2.4</ecNumber>
    </recommendedName>
    <alternativeName>
        <fullName evidence="2">D-Ala-D-Ala ligase</fullName>
    </alternativeName>
    <alternativeName>
        <fullName evidence="2">D-alanylalanine synthetase</fullName>
    </alternativeName>
</protein>
<dbReference type="EC" id="6.3.2.4" evidence="2"/>
<dbReference type="EMBL" id="CP001033">
    <property type="protein sequence ID" value="ACB90895.1"/>
    <property type="molecule type" value="Genomic_DNA"/>
</dbReference>
<dbReference type="RefSeq" id="WP_000814633.1">
    <property type="nucleotide sequence ID" value="NC_010582.1"/>
</dbReference>
<dbReference type="SMR" id="B2IRS6"/>
<dbReference type="KEGG" id="spw:SPCG_1643"/>
<dbReference type="HOGENOM" id="CLU_039268_0_0_9"/>
<dbReference type="UniPathway" id="UPA00219"/>
<dbReference type="GO" id="GO:0005829">
    <property type="term" value="C:cytosol"/>
    <property type="evidence" value="ECO:0007669"/>
    <property type="project" value="TreeGrafter"/>
</dbReference>
<dbReference type="GO" id="GO:0005524">
    <property type="term" value="F:ATP binding"/>
    <property type="evidence" value="ECO:0007669"/>
    <property type="project" value="UniProtKB-KW"/>
</dbReference>
<dbReference type="GO" id="GO:0008716">
    <property type="term" value="F:D-alanine-D-alanine ligase activity"/>
    <property type="evidence" value="ECO:0007669"/>
    <property type="project" value="UniProtKB-UniRule"/>
</dbReference>
<dbReference type="GO" id="GO:0046872">
    <property type="term" value="F:metal ion binding"/>
    <property type="evidence" value="ECO:0007669"/>
    <property type="project" value="UniProtKB-KW"/>
</dbReference>
<dbReference type="GO" id="GO:0071555">
    <property type="term" value="P:cell wall organization"/>
    <property type="evidence" value="ECO:0007669"/>
    <property type="project" value="UniProtKB-KW"/>
</dbReference>
<dbReference type="GO" id="GO:0009252">
    <property type="term" value="P:peptidoglycan biosynthetic process"/>
    <property type="evidence" value="ECO:0007669"/>
    <property type="project" value="UniProtKB-UniRule"/>
</dbReference>
<dbReference type="GO" id="GO:0008360">
    <property type="term" value="P:regulation of cell shape"/>
    <property type="evidence" value="ECO:0007669"/>
    <property type="project" value="UniProtKB-KW"/>
</dbReference>
<dbReference type="FunFam" id="3.30.1490.20:FF:000007">
    <property type="entry name" value="D-alanine--D-alanine ligase"/>
    <property type="match status" value="1"/>
</dbReference>
<dbReference type="FunFam" id="3.30.470.20:FF:000008">
    <property type="entry name" value="D-alanine--D-alanine ligase"/>
    <property type="match status" value="1"/>
</dbReference>
<dbReference type="FunFam" id="3.40.50.20:FF:000029">
    <property type="entry name" value="D-alanine--D-alanine ligase"/>
    <property type="match status" value="1"/>
</dbReference>
<dbReference type="Gene3D" id="3.40.50.20">
    <property type="match status" value="1"/>
</dbReference>
<dbReference type="Gene3D" id="3.30.1490.20">
    <property type="entry name" value="ATP-grasp fold, A domain"/>
    <property type="match status" value="1"/>
</dbReference>
<dbReference type="Gene3D" id="3.30.470.20">
    <property type="entry name" value="ATP-grasp fold, B domain"/>
    <property type="match status" value="1"/>
</dbReference>
<dbReference type="HAMAP" id="MF_00047">
    <property type="entry name" value="Dala_Dala_lig"/>
    <property type="match status" value="1"/>
</dbReference>
<dbReference type="InterPro" id="IPR011761">
    <property type="entry name" value="ATP-grasp"/>
</dbReference>
<dbReference type="InterPro" id="IPR013815">
    <property type="entry name" value="ATP_grasp_subdomain_1"/>
</dbReference>
<dbReference type="InterPro" id="IPR000291">
    <property type="entry name" value="D-Ala_lig_Van_CS"/>
</dbReference>
<dbReference type="InterPro" id="IPR005905">
    <property type="entry name" value="D_ala_D_ala"/>
</dbReference>
<dbReference type="InterPro" id="IPR011095">
    <property type="entry name" value="Dala_Dala_lig_C"/>
</dbReference>
<dbReference type="InterPro" id="IPR011127">
    <property type="entry name" value="Dala_Dala_lig_N"/>
</dbReference>
<dbReference type="InterPro" id="IPR016185">
    <property type="entry name" value="PreATP-grasp_dom_sf"/>
</dbReference>
<dbReference type="NCBIfam" id="TIGR01205">
    <property type="entry name" value="D_ala_D_alaTIGR"/>
    <property type="match status" value="1"/>
</dbReference>
<dbReference type="NCBIfam" id="NF002528">
    <property type="entry name" value="PRK01966.1-4"/>
    <property type="match status" value="1"/>
</dbReference>
<dbReference type="NCBIfam" id="NF002529">
    <property type="entry name" value="PRK01966.1-5"/>
    <property type="match status" value="1"/>
</dbReference>
<dbReference type="PANTHER" id="PTHR23132">
    <property type="entry name" value="D-ALANINE--D-ALANINE LIGASE"/>
    <property type="match status" value="1"/>
</dbReference>
<dbReference type="PANTHER" id="PTHR23132:SF25">
    <property type="entry name" value="D-ALANINE--D-ALANINE LIGASE A"/>
    <property type="match status" value="1"/>
</dbReference>
<dbReference type="Pfam" id="PF07478">
    <property type="entry name" value="Dala_Dala_lig_C"/>
    <property type="match status" value="1"/>
</dbReference>
<dbReference type="Pfam" id="PF01820">
    <property type="entry name" value="Dala_Dala_lig_N"/>
    <property type="match status" value="1"/>
</dbReference>
<dbReference type="PIRSF" id="PIRSF039102">
    <property type="entry name" value="Ddl/VanB"/>
    <property type="match status" value="1"/>
</dbReference>
<dbReference type="SUPFAM" id="SSF56059">
    <property type="entry name" value="Glutathione synthetase ATP-binding domain-like"/>
    <property type="match status" value="1"/>
</dbReference>
<dbReference type="SUPFAM" id="SSF52440">
    <property type="entry name" value="PreATP-grasp domain"/>
    <property type="match status" value="1"/>
</dbReference>
<dbReference type="PROSITE" id="PS50975">
    <property type="entry name" value="ATP_GRASP"/>
    <property type="match status" value="1"/>
</dbReference>
<dbReference type="PROSITE" id="PS00843">
    <property type="entry name" value="DALA_DALA_LIGASE_1"/>
    <property type="match status" value="1"/>
</dbReference>
<dbReference type="PROSITE" id="PS00844">
    <property type="entry name" value="DALA_DALA_LIGASE_2"/>
    <property type="match status" value="1"/>
</dbReference>
<proteinExistence type="inferred from homology"/>
<organism>
    <name type="scientific">Streptococcus pneumoniae (strain CGSP14)</name>
    <dbReference type="NCBI Taxonomy" id="516950"/>
    <lineage>
        <taxon>Bacteria</taxon>
        <taxon>Bacillati</taxon>
        <taxon>Bacillota</taxon>
        <taxon>Bacilli</taxon>
        <taxon>Lactobacillales</taxon>
        <taxon>Streptococcaceae</taxon>
        <taxon>Streptococcus</taxon>
    </lineage>
</organism>
<accession>B2IRS6</accession>
<reference key="1">
    <citation type="journal article" date="2009" name="BMC Genomics">
        <title>Genome evolution driven by host adaptations results in a more virulent and antimicrobial-resistant Streptococcus pneumoniae serotype 14.</title>
        <authorList>
            <person name="Ding F."/>
            <person name="Tang P."/>
            <person name="Hsu M.-H."/>
            <person name="Cui P."/>
            <person name="Hu S."/>
            <person name="Yu J."/>
            <person name="Chiu C.-H."/>
        </authorList>
    </citation>
    <scope>NUCLEOTIDE SEQUENCE [LARGE SCALE GENOMIC DNA]</scope>
    <source>
        <strain>CGSP14</strain>
    </source>
</reference>
<name>DDL_STRPS</name>